<proteinExistence type="inferred from homology"/>
<evidence type="ECO:0000305" key="1"/>
<accession>Q2G035</accession>
<organism>
    <name type="scientific">Staphylococcus aureus (strain NCTC 8325 / PS 47)</name>
    <dbReference type="NCBI Taxonomy" id="93061"/>
    <lineage>
        <taxon>Bacteria</taxon>
        <taxon>Bacillati</taxon>
        <taxon>Bacillota</taxon>
        <taxon>Bacilli</taxon>
        <taxon>Bacillales</taxon>
        <taxon>Staphylococcaceae</taxon>
        <taxon>Staphylococcus</taxon>
    </lineage>
</organism>
<protein>
    <recommendedName>
        <fullName>Epimerase family protein SAOUHSC_00792</fullName>
    </recommendedName>
</protein>
<keyword id="KW-1185">Reference proteome</keyword>
<sequence length="300" mass="34227">MKQYLITGGTGMVGSQLVNEIKKSDSHITILTRHDQISNDKKISYVNWAKSGWEHKVPQNIDVVINLAGATLNKRWTPEYKQTLMLSRIQSTQALYELFKSRNKAPKALFNASATGYYPPDLFMSYTEVYKTLPFDFLSDIVYQWERFAQQFEQLGTRVVIGRFGIILSNEGGALQTMKLPYEYYIGGKLGSGQQWYSWIHINDLIQAILFLINNESASGPFNLTAPIPERQNLFGYTLARAMHKPHETWAPSLAMRLILGQMSTVVLDTQKVLPNKIQALGFQFKYSNLKMALEDLIKE</sequence>
<feature type="chain" id="PRO_0000274149" description="Epimerase family protein SAOUHSC_00792">
    <location>
        <begin position="1"/>
        <end position="300"/>
    </location>
</feature>
<comment type="similarity">
    <text evidence="1">Belongs to the NAD(P)-dependent epimerase/dehydratase family. SDR39U1 subfamily.</text>
</comment>
<dbReference type="EMBL" id="CP000253">
    <property type="protein sequence ID" value="ABD29920.1"/>
    <property type="molecule type" value="Genomic_DNA"/>
</dbReference>
<dbReference type="RefSeq" id="WP_000816295.1">
    <property type="nucleotide sequence ID" value="NZ_LS483365.1"/>
</dbReference>
<dbReference type="RefSeq" id="YP_499348.1">
    <property type="nucleotide sequence ID" value="NC_007795.1"/>
</dbReference>
<dbReference type="SMR" id="Q2G035"/>
<dbReference type="STRING" id="93061.SAOUHSC_00792"/>
<dbReference type="PaxDb" id="1280-SAXN108_0837"/>
<dbReference type="GeneID" id="3919355"/>
<dbReference type="KEGG" id="sao:SAOUHSC_00792"/>
<dbReference type="PATRIC" id="fig|93061.5.peg.714"/>
<dbReference type="eggNOG" id="COG1090">
    <property type="taxonomic scope" value="Bacteria"/>
</dbReference>
<dbReference type="HOGENOM" id="CLU_047373_0_3_9"/>
<dbReference type="OrthoDB" id="9801773at2"/>
<dbReference type="PRO" id="PR:Q2G035"/>
<dbReference type="Proteomes" id="UP000008816">
    <property type="component" value="Chromosome"/>
</dbReference>
<dbReference type="Gene3D" id="3.40.50.720">
    <property type="entry name" value="NAD(P)-binding Rossmann-like Domain"/>
    <property type="match status" value="1"/>
</dbReference>
<dbReference type="InterPro" id="IPR013549">
    <property type="entry name" value="DUF1731"/>
</dbReference>
<dbReference type="InterPro" id="IPR001509">
    <property type="entry name" value="Epimerase_deHydtase"/>
</dbReference>
<dbReference type="InterPro" id="IPR036291">
    <property type="entry name" value="NAD(P)-bd_dom_sf"/>
</dbReference>
<dbReference type="InterPro" id="IPR010099">
    <property type="entry name" value="SDR39U1"/>
</dbReference>
<dbReference type="NCBIfam" id="TIGR01777">
    <property type="entry name" value="yfcH"/>
    <property type="match status" value="1"/>
</dbReference>
<dbReference type="PANTHER" id="PTHR11092:SF0">
    <property type="entry name" value="EPIMERASE FAMILY PROTEIN SDR39U1"/>
    <property type="match status" value="1"/>
</dbReference>
<dbReference type="PANTHER" id="PTHR11092">
    <property type="entry name" value="SUGAR NUCLEOTIDE EPIMERASE RELATED"/>
    <property type="match status" value="1"/>
</dbReference>
<dbReference type="Pfam" id="PF08338">
    <property type="entry name" value="DUF1731"/>
    <property type="match status" value="1"/>
</dbReference>
<dbReference type="Pfam" id="PF01370">
    <property type="entry name" value="Epimerase"/>
    <property type="match status" value="1"/>
</dbReference>
<dbReference type="SUPFAM" id="SSF51735">
    <property type="entry name" value="NAD(P)-binding Rossmann-fold domains"/>
    <property type="match status" value="1"/>
</dbReference>
<name>Y792_STAA8</name>
<gene>
    <name type="ordered locus">SAOUHSC_00792</name>
</gene>
<reference key="1">
    <citation type="book" date="2006" name="Gram positive pathogens, 2nd edition">
        <title>The Staphylococcus aureus NCTC 8325 genome.</title>
        <editorList>
            <person name="Fischetti V."/>
            <person name="Novick R."/>
            <person name="Ferretti J."/>
            <person name="Portnoy D."/>
            <person name="Rood J."/>
        </editorList>
        <authorList>
            <person name="Gillaspy A.F."/>
            <person name="Worrell V."/>
            <person name="Orvis J."/>
            <person name="Roe B.A."/>
            <person name="Dyer D.W."/>
            <person name="Iandolo J.J."/>
        </authorList>
    </citation>
    <scope>NUCLEOTIDE SEQUENCE [LARGE SCALE GENOMIC DNA]</scope>
    <source>
        <strain>NCTC 8325 / PS 47</strain>
    </source>
</reference>